<feature type="chain" id="PRO_0000216315" description="Uncharacterized protein PM1122">
    <location>
        <begin position="1"/>
        <end position="107"/>
    </location>
</feature>
<organism>
    <name type="scientific">Pasteurella multocida (strain Pm70)</name>
    <dbReference type="NCBI Taxonomy" id="272843"/>
    <lineage>
        <taxon>Bacteria</taxon>
        <taxon>Pseudomonadati</taxon>
        <taxon>Pseudomonadota</taxon>
        <taxon>Gammaproteobacteria</taxon>
        <taxon>Pasteurellales</taxon>
        <taxon>Pasteurellaceae</taxon>
        <taxon>Pasteurella</taxon>
    </lineage>
</organism>
<protein>
    <recommendedName>
        <fullName>Uncharacterized protein PM1122</fullName>
    </recommendedName>
</protein>
<dbReference type="EMBL" id="AE004439">
    <property type="protein sequence ID" value="AAK03206.1"/>
    <property type="molecule type" value="Genomic_DNA"/>
</dbReference>
<dbReference type="RefSeq" id="WP_010907028.1">
    <property type="nucleotide sequence ID" value="NC_002663.1"/>
</dbReference>
<dbReference type="SMR" id="Q9CLT7"/>
<dbReference type="EnsemblBacteria" id="AAK03206">
    <property type="protein sequence ID" value="AAK03206"/>
    <property type="gene ID" value="PM1122"/>
</dbReference>
<dbReference type="KEGG" id="pmu:PM1122"/>
<dbReference type="PATRIC" id="fig|272843.6.peg.1135"/>
<dbReference type="HOGENOM" id="CLU_156499_0_0_6"/>
<dbReference type="OrthoDB" id="5684171at2"/>
<dbReference type="Proteomes" id="UP000000809">
    <property type="component" value="Chromosome"/>
</dbReference>
<dbReference type="InterPro" id="IPR022148">
    <property type="entry name" value="CopG_antitoxin"/>
</dbReference>
<dbReference type="Pfam" id="PF12441">
    <property type="entry name" value="CopG_antitoxin"/>
    <property type="match status" value="1"/>
</dbReference>
<sequence length="107" mass="12708">MNTIKEQEIYKNIDLWESDELGCSKETARISNFSVEDLQKSIQLQSISLRIQKDVLEDLKYIAKSYGIGYQPLMKQILKRFVDAEKQLLLREEVEFKKEFNKKRIYG</sequence>
<gene>
    <name type="ordered locus">PM1122</name>
</gene>
<proteinExistence type="predicted"/>
<reference key="1">
    <citation type="journal article" date="2001" name="Proc. Natl. Acad. Sci. U.S.A.">
        <title>Complete genomic sequence of Pasteurella multocida Pm70.</title>
        <authorList>
            <person name="May B.J."/>
            <person name="Zhang Q."/>
            <person name="Li L.L."/>
            <person name="Paustian M.L."/>
            <person name="Whittam T.S."/>
            <person name="Kapur V."/>
        </authorList>
    </citation>
    <scope>NUCLEOTIDE SEQUENCE [LARGE SCALE GENOMIC DNA]</scope>
    <source>
        <strain>Pm70</strain>
    </source>
</reference>
<name>Y1122_PASMU</name>
<accession>Q9CLT7</accession>
<keyword id="KW-1185">Reference proteome</keyword>